<comment type="function">
    <text evidence="1">Endoplasmic reticulum cargo receptor that mediates the export of lipoproteins by recruiting cargos into COPII vesicles to facilitate their secretion. Acts as a cargo receptor for lipoproteins bearing both APOB and APOA1, thereby regulating lipoprotein delivery and the maintenance of lipid homeostasis.</text>
</comment>
<comment type="subcellular location">
    <subcellularLocation>
        <location evidence="1">Endoplasmic reticulum membrane</location>
        <topology evidence="2">Multi-pass membrane protein</topology>
    </subcellularLocation>
    <subcellularLocation>
        <location evidence="1">Endoplasmic reticulum-Golgi intermediate compartment membrane</location>
        <topology evidence="2">Multi-pass membrane protein</topology>
    </subcellularLocation>
    <subcellularLocation>
        <location evidence="1">Golgi apparatus membrane</location>
        <topology evidence="2">Multi-pass membrane protein</topology>
    </subcellularLocation>
    <text evidence="1">Active at endoplasmic reticulum exit sites (ERES) where it is incorporated together with its lipoprotein cargos into COPII-coated vesicles. From the Golgi it is recycled back to the endoplasmic reticulum.</text>
</comment>
<comment type="domain">
    <text evidence="1">The di-lysine motif confers endoplasmic reticulum localization for type I membrane proteins.</text>
</comment>
<comment type="similarity">
    <text evidence="4">Belongs to the SURF4 family.</text>
</comment>
<protein>
    <recommendedName>
        <fullName evidence="4">Surfeit locus protein 4</fullName>
    </recommendedName>
</protein>
<proteinExistence type="evidence at transcript level"/>
<organism>
    <name type="scientific">Gallus gallus</name>
    <name type="common">Chicken</name>
    <dbReference type="NCBI Taxonomy" id="9031"/>
    <lineage>
        <taxon>Eukaryota</taxon>
        <taxon>Metazoa</taxon>
        <taxon>Chordata</taxon>
        <taxon>Craniata</taxon>
        <taxon>Vertebrata</taxon>
        <taxon>Euteleostomi</taxon>
        <taxon>Archelosauria</taxon>
        <taxon>Archosauria</taxon>
        <taxon>Dinosauria</taxon>
        <taxon>Saurischia</taxon>
        <taxon>Theropoda</taxon>
        <taxon>Coelurosauria</taxon>
        <taxon>Aves</taxon>
        <taxon>Neognathae</taxon>
        <taxon>Galloanserae</taxon>
        <taxon>Galliformes</taxon>
        <taxon>Phasianidae</taxon>
        <taxon>Phasianinae</taxon>
        <taxon>Gallus</taxon>
    </lineage>
</organism>
<sequence>MGQNDIMSTAEDFADQFLRVTKQYLPHVARLCLISTFLEDGIRMWFQWSEQRDYIDGTWNCGYFLASIFVFINLFGQLSGCILVLSRNFVQYACFGLFGIIALQTIAYSILWDLKFLMRNLALGGGLLLLLAESRSEGKSMFAGVPTMRESSPKQYMQLGGRVLLVLMFMTLLHFDMNFFYILQNIVGTALIILVAIGFKTKLAALTLVIWLFGINIYFNAFWTIPAYKPMHDFLKYDFFQTMSVIGGLLLVVALGPGGVSMDEKKKEW</sequence>
<dbReference type="EMBL" id="AB050010">
    <property type="protein sequence ID" value="BAC65172.1"/>
    <property type="molecule type" value="mRNA"/>
</dbReference>
<dbReference type="RefSeq" id="NP_989686.1">
    <property type="nucleotide sequence ID" value="NM_204355.2"/>
</dbReference>
<dbReference type="FunCoup" id="Q800K9">
    <property type="interactions" value="2292"/>
</dbReference>
<dbReference type="STRING" id="9031.ENSGALP00000041673"/>
<dbReference type="PaxDb" id="9031-ENSGALP00000041673"/>
<dbReference type="GeneID" id="374273"/>
<dbReference type="KEGG" id="gga:374273"/>
<dbReference type="CTD" id="6836"/>
<dbReference type="VEuPathDB" id="HostDB:geneid_374273"/>
<dbReference type="eggNOG" id="KOG3998">
    <property type="taxonomic scope" value="Eukaryota"/>
</dbReference>
<dbReference type="HOGENOM" id="CLU_056195_0_0_1"/>
<dbReference type="InParanoid" id="Q800K9"/>
<dbReference type="OMA" id="SSPRQYM"/>
<dbReference type="OrthoDB" id="7859621at2759"/>
<dbReference type="PhylomeDB" id="Q800K9"/>
<dbReference type="TreeFam" id="TF300001"/>
<dbReference type="Reactome" id="R-GGA-6798695">
    <property type="pathway name" value="Neutrophil degranulation"/>
</dbReference>
<dbReference type="Reactome" id="R-GGA-6811434">
    <property type="pathway name" value="COPI-dependent Golgi-to-ER retrograde traffic"/>
</dbReference>
<dbReference type="PRO" id="PR:Q800K9"/>
<dbReference type="Proteomes" id="UP000000539">
    <property type="component" value="Chromosome 17"/>
</dbReference>
<dbReference type="Bgee" id="ENSGALG00000028265">
    <property type="expression patterns" value="Expressed in spermatocyte and 13 other cell types or tissues"/>
</dbReference>
<dbReference type="GO" id="GO:0005783">
    <property type="term" value="C:endoplasmic reticulum"/>
    <property type="evidence" value="ECO:0000318"/>
    <property type="project" value="GO_Central"/>
</dbReference>
<dbReference type="GO" id="GO:0005789">
    <property type="term" value="C:endoplasmic reticulum membrane"/>
    <property type="evidence" value="ECO:0007669"/>
    <property type="project" value="UniProtKB-SubCell"/>
</dbReference>
<dbReference type="GO" id="GO:0005793">
    <property type="term" value="C:endoplasmic reticulum-Golgi intermediate compartment"/>
    <property type="evidence" value="ECO:0000318"/>
    <property type="project" value="GO_Central"/>
</dbReference>
<dbReference type="GO" id="GO:0033116">
    <property type="term" value="C:endoplasmic reticulum-Golgi intermediate compartment membrane"/>
    <property type="evidence" value="ECO:0007669"/>
    <property type="project" value="UniProtKB-SubCell"/>
</dbReference>
<dbReference type="GO" id="GO:0000139">
    <property type="term" value="C:Golgi membrane"/>
    <property type="evidence" value="ECO:0007669"/>
    <property type="project" value="UniProtKB-SubCell"/>
</dbReference>
<dbReference type="GO" id="GO:0038024">
    <property type="term" value="F:cargo receptor activity"/>
    <property type="evidence" value="ECO:0000250"/>
    <property type="project" value="UniProtKB"/>
</dbReference>
<dbReference type="GO" id="GO:0006888">
    <property type="term" value="P:endoplasmic reticulum to Golgi vesicle-mediated transport"/>
    <property type="evidence" value="ECO:0000250"/>
    <property type="project" value="UniProtKB"/>
</dbReference>
<dbReference type="GO" id="GO:0007030">
    <property type="term" value="P:Golgi organization"/>
    <property type="evidence" value="ECO:0000318"/>
    <property type="project" value="GO_Central"/>
</dbReference>
<dbReference type="GO" id="GO:0055088">
    <property type="term" value="P:lipid homeostasis"/>
    <property type="evidence" value="ECO:0000250"/>
    <property type="project" value="UniProtKB"/>
</dbReference>
<dbReference type="GO" id="GO:0042953">
    <property type="term" value="P:lipoprotein transport"/>
    <property type="evidence" value="ECO:0000250"/>
    <property type="project" value="UniProtKB"/>
</dbReference>
<dbReference type="GO" id="GO:0032368">
    <property type="term" value="P:regulation of lipid transport"/>
    <property type="evidence" value="ECO:0000250"/>
    <property type="project" value="UniProtKB"/>
</dbReference>
<dbReference type="InterPro" id="IPR045214">
    <property type="entry name" value="Surf1/Surf4"/>
</dbReference>
<dbReference type="InterPro" id="IPR002995">
    <property type="entry name" value="Surf4"/>
</dbReference>
<dbReference type="PANTHER" id="PTHR23427">
    <property type="entry name" value="SURFEIT LOCUS PROTEIN"/>
    <property type="match status" value="1"/>
</dbReference>
<dbReference type="PANTHER" id="PTHR23427:SF13">
    <property type="entry name" value="SURFEIT LOCUS PROTEIN 4"/>
    <property type="match status" value="1"/>
</dbReference>
<dbReference type="Pfam" id="PF02077">
    <property type="entry name" value="SURF4"/>
    <property type="match status" value="1"/>
</dbReference>
<dbReference type="PROSITE" id="PS01339">
    <property type="entry name" value="SURF4"/>
    <property type="match status" value="1"/>
</dbReference>
<keyword id="KW-0256">Endoplasmic reticulum</keyword>
<keyword id="KW-0333">Golgi apparatus</keyword>
<keyword id="KW-0472">Membrane</keyword>
<keyword id="KW-0653">Protein transport</keyword>
<keyword id="KW-1185">Reference proteome</keyword>
<keyword id="KW-0812">Transmembrane</keyword>
<keyword id="KW-1133">Transmembrane helix</keyword>
<keyword id="KW-0813">Transport</keyword>
<feature type="chain" id="PRO_0000293484" description="Surfeit locus protein 4">
    <location>
        <begin position="1"/>
        <end position="269"/>
    </location>
</feature>
<feature type="transmembrane region" description="Helical" evidence="2">
    <location>
        <begin position="64"/>
        <end position="84"/>
    </location>
</feature>
<feature type="transmembrane region" description="Helical" evidence="2">
    <location>
        <begin position="92"/>
        <end position="112"/>
    </location>
</feature>
<feature type="transmembrane region" description="Helical" evidence="2">
    <location>
        <begin position="157"/>
        <end position="177"/>
    </location>
</feature>
<feature type="transmembrane region" description="Helical" evidence="2">
    <location>
        <begin position="179"/>
        <end position="199"/>
    </location>
</feature>
<feature type="transmembrane region" description="Helical" evidence="2">
    <location>
        <begin position="203"/>
        <end position="223"/>
    </location>
</feature>
<feature type="transmembrane region" description="Helical" evidence="2">
    <location>
        <begin position="242"/>
        <end position="262"/>
    </location>
</feature>
<feature type="short sequence motif" description="Di-lysine motif" evidence="1">
    <location>
        <begin position="266"/>
        <end position="269"/>
    </location>
</feature>
<name>SURF4_CHICK</name>
<accession>Q800K9</accession>
<evidence type="ECO:0000250" key="1">
    <source>
        <dbReference type="UniProtKB" id="O15260"/>
    </source>
</evidence>
<evidence type="ECO:0000255" key="2"/>
<evidence type="ECO:0000303" key="3">
    <source ref="1"/>
</evidence>
<evidence type="ECO:0000305" key="4"/>
<reference key="1">
    <citation type="submission" date="2000-10" db="EMBL/GenBank/DDBJ databases">
        <title>The gene cluster containing ribosomal protein L7a gene of the chicken.</title>
        <authorList>
            <person name="Maeda N."/>
            <person name="Toku S."/>
            <person name="Kenmochi N."/>
            <person name="Tanaka T."/>
        </authorList>
    </citation>
    <scope>NUCLEOTIDE SEQUENCE [MRNA]</scope>
</reference>
<gene>
    <name evidence="3" type="primary">SURF4</name>
</gene>